<dbReference type="EC" id="6.1.1.17" evidence="1"/>
<dbReference type="EMBL" id="AE010300">
    <property type="protein sequence ID" value="AAN51388.1"/>
    <property type="molecule type" value="Genomic_DNA"/>
</dbReference>
<dbReference type="RefSeq" id="NP_714370.1">
    <property type="nucleotide sequence ID" value="NC_004342.2"/>
</dbReference>
<dbReference type="RefSeq" id="WP_001076468.1">
    <property type="nucleotide sequence ID" value="NC_004342.2"/>
</dbReference>
<dbReference type="SMR" id="Q8EYM3"/>
<dbReference type="FunCoup" id="Q8EYM3">
    <property type="interactions" value="517"/>
</dbReference>
<dbReference type="STRING" id="189518.LA_4190"/>
<dbReference type="PaxDb" id="189518-LA_4190"/>
<dbReference type="EnsemblBacteria" id="AAN51388">
    <property type="protein sequence ID" value="AAN51388"/>
    <property type="gene ID" value="LA_4190"/>
</dbReference>
<dbReference type="GeneID" id="61143211"/>
<dbReference type="KEGG" id="lil:LA_4190"/>
<dbReference type="PATRIC" id="fig|189518.3.peg.4162"/>
<dbReference type="HOGENOM" id="CLU_015768_6_3_12"/>
<dbReference type="InParanoid" id="Q8EYM3"/>
<dbReference type="OrthoDB" id="9807503at2"/>
<dbReference type="Proteomes" id="UP000001408">
    <property type="component" value="Chromosome I"/>
</dbReference>
<dbReference type="GO" id="GO:0005829">
    <property type="term" value="C:cytosol"/>
    <property type="evidence" value="ECO:0000318"/>
    <property type="project" value="GO_Central"/>
</dbReference>
<dbReference type="GO" id="GO:0005524">
    <property type="term" value="F:ATP binding"/>
    <property type="evidence" value="ECO:0007669"/>
    <property type="project" value="UniProtKB-UniRule"/>
</dbReference>
<dbReference type="GO" id="GO:0004818">
    <property type="term" value="F:glutamate-tRNA ligase activity"/>
    <property type="evidence" value="ECO:0000318"/>
    <property type="project" value="GO_Central"/>
</dbReference>
<dbReference type="GO" id="GO:0000049">
    <property type="term" value="F:tRNA binding"/>
    <property type="evidence" value="ECO:0007669"/>
    <property type="project" value="InterPro"/>
</dbReference>
<dbReference type="GO" id="GO:0008270">
    <property type="term" value="F:zinc ion binding"/>
    <property type="evidence" value="ECO:0007669"/>
    <property type="project" value="InterPro"/>
</dbReference>
<dbReference type="GO" id="GO:0006424">
    <property type="term" value="P:glutamyl-tRNA aminoacylation"/>
    <property type="evidence" value="ECO:0000318"/>
    <property type="project" value="GO_Central"/>
</dbReference>
<dbReference type="CDD" id="cd00808">
    <property type="entry name" value="GluRS_core"/>
    <property type="match status" value="1"/>
</dbReference>
<dbReference type="FunFam" id="3.40.50.620:FF:000045">
    <property type="entry name" value="Glutamate--tRNA ligase, mitochondrial"/>
    <property type="match status" value="1"/>
</dbReference>
<dbReference type="Gene3D" id="1.10.10.350">
    <property type="match status" value="1"/>
</dbReference>
<dbReference type="Gene3D" id="3.40.50.620">
    <property type="entry name" value="HUPs"/>
    <property type="match status" value="1"/>
</dbReference>
<dbReference type="HAMAP" id="MF_00022">
    <property type="entry name" value="Glu_tRNA_synth_type1"/>
    <property type="match status" value="1"/>
</dbReference>
<dbReference type="InterPro" id="IPR045462">
    <property type="entry name" value="aa-tRNA-synth_I_cd-bd"/>
</dbReference>
<dbReference type="InterPro" id="IPR020751">
    <property type="entry name" value="aa-tRNA-synth_I_codon-bd_sub2"/>
</dbReference>
<dbReference type="InterPro" id="IPR001412">
    <property type="entry name" value="aa-tRNA-synth_I_CS"/>
</dbReference>
<dbReference type="InterPro" id="IPR008925">
    <property type="entry name" value="aa_tRNA-synth_I_cd-bd_sf"/>
</dbReference>
<dbReference type="InterPro" id="IPR004527">
    <property type="entry name" value="Glu-tRNA-ligase_bac/mito"/>
</dbReference>
<dbReference type="InterPro" id="IPR000924">
    <property type="entry name" value="Glu/Gln-tRNA-synth"/>
</dbReference>
<dbReference type="InterPro" id="IPR020058">
    <property type="entry name" value="Glu/Gln-tRNA-synth_Ib_cat-dom"/>
</dbReference>
<dbReference type="InterPro" id="IPR049940">
    <property type="entry name" value="GluQ/Sye"/>
</dbReference>
<dbReference type="InterPro" id="IPR033910">
    <property type="entry name" value="GluRS_core"/>
</dbReference>
<dbReference type="InterPro" id="IPR014729">
    <property type="entry name" value="Rossmann-like_a/b/a_fold"/>
</dbReference>
<dbReference type="NCBIfam" id="TIGR00464">
    <property type="entry name" value="gltX_bact"/>
    <property type="match status" value="1"/>
</dbReference>
<dbReference type="PANTHER" id="PTHR43311">
    <property type="entry name" value="GLUTAMATE--TRNA LIGASE"/>
    <property type="match status" value="1"/>
</dbReference>
<dbReference type="PANTHER" id="PTHR43311:SF2">
    <property type="entry name" value="GLUTAMATE--TRNA LIGASE, MITOCHONDRIAL-RELATED"/>
    <property type="match status" value="1"/>
</dbReference>
<dbReference type="Pfam" id="PF19269">
    <property type="entry name" value="Anticodon_2"/>
    <property type="match status" value="1"/>
</dbReference>
<dbReference type="Pfam" id="PF00749">
    <property type="entry name" value="tRNA-synt_1c"/>
    <property type="match status" value="1"/>
</dbReference>
<dbReference type="PRINTS" id="PR00987">
    <property type="entry name" value="TRNASYNTHGLU"/>
</dbReference>
<dbReference type="SUPFAM" id="SSF48163">
    <property type="entry name" value="An anticodon-binding domain of class I aminoacyl-tRNA synthetases"/>
    <property type="match status" value="1"/>
</dbReference>
<dbReference type="SUPFAM" id="SSF52374">
    <property type="entry name" value="Nucleotidylyl transferase"/>
    <property type="match status" value="1"/>
</dbReference>
<dbReference type="PROSITE" id="PS00178">
    <property type="entry name" value="AA_TRNA_LIGASE_I"/>
    <property type="match status" value="1"/>
</dbReference>
<reference key="1">
    <citation type="journal article" date="2003" name="Nature">
        <title>Unique physiological and pathogenic features of Leptospira interrogans revealed by whole-genome sequencing.</title>
        <authorList>
            <person name="Ren S.-X."/>
            <person name="Fu G."/>
            <person name="Jiang X.-G."/>
            <person name="Zeng R."/>
            <person name="Miao Y.-G."/>
            <person name="Xu H."/>
            <person name="Zhang Y.-X."/>
            <person name="Xiong H."/>
            <person name="Lu G."/>
            <person name="Lu L.-F."/>
            <person name="Jiang H.-Q."/>
            <person name="Jia J."/>
            <person name="Tu Y.-F."/>
            <person name="Jiang J.-X."/>
            <person name="Gu W.-Y."/>
            <person name="Zhang Y.-Q."/>
            <person name="Cai Z."/>
            <person name="Sheng H.-H."/>
            <person name="Yin H.-F."/>
            <person name="Zhang Y."/>
            <person name="Zhu G.-F."/>
            <person name="Wan M."/>
            <person name="Huang H.-L."/>
            <person name="Qian Z."/>
            <person name="Wang S.-Y."/>
            <person name="Ma W."/>
            <person name="Yao Z.-J."/>
            <person name="Shen Y."/>
            <person name="Qiang B.-Q."/>
            <person name="Xia Q.-C."/>
            <person name="Guo X.-K."/>
            <person name="Danchin A."/>
            <person name="Saint Girons I."/>
            <person name="Somerville R.L."/>
            <person name="Wen Y.-M."/>
            <person name="Shi M.-H."/>
            <person name="Chen Z."/>
            <person name="Xu J.-G."/>
            <person name="Zhao G.-P."/>
        </authorList>
    </citation>
    <scope>NUCLEOTIDE SEQUENCE [LARGE SCALE GENOMIC DNA]</scope>
    <source>
        <strain>56601</strain>
    </source>
</reference>
<sequence>MNQSKEVRTRFAPSPSGFLHVGGARTALFNYLYAKSQGGKFILRIEDTDQNRSTEDSFKIILESLKWLGVNWDEGPEVGGEYGPYIQSQRLNIYKEYTEKLLKEKKAYRCFCTQEELEAKKKQSEAMGVPYVYDGLHANMSDEEVQEKLKQGIPYSVRFKTPSKTLIINDIIQGKVKFETKLIGDFIIVKSDGFPSYNYAVVVDDALMKITHVIRGVGHLSNTPRQILLYEALGYNIPEFAHASEIVGMDGKKLSKRAGATSILAFRDLGYLPETFRNYMALLGWTSTDGREFLPGDELEKIFDVHRCSKSPSTFDVFKKPKGSDEEVVTNFSDLTQIAEAMNPKSKLNWLSNRTIRDLNISKVLENLLPFLMDRKDIPAEVKNVNNPILTSIVESVRVYLDNLTQAPDYVAEFFVTDLKIQSEETIGFLKDGEGPKVVNEFYEILKNSDPKTDEDYKNLMSKVGEVTGQKGKTLYMPIRAATTGKSAGLELPILFPLLGKEKLLQRIEKTSKETGISLSN</sequence>
<keyword id="KW-0030">Aminoacyl-tRNA synthetase</keyword>
<keyword id="KW-0067">ATP-binding</keyword>
<keyword id="KW-0963">Cytoplasm</keyword>
<keyword id="KW-0436">Ligase</keyword>
<keyword id="KW-0547">Nucleotide-binding</keyword>
<keyword id="KW-0648">Protein biosynthesis</keyword>
<keyword id="KW-1185">Reference proteome</keyword>
<evidence type="ECO:0000255" key="1">
    <source>
        <dbReference type="HAMAP-Rule" id="MF_00022"/>
    </source>
</evidence>
<comment type="function">
    <text evidence="1">Catalyzes the attachment of glutamate to tRNA(Glu) in a two-step reaction: glutamate is first activated by ATP to form Glu-AMP and then transferred to the acceptor end of tRNA(Glu).</text>
</comment>
<comment type="catalytic activity">
    <reaction evidence="1">
        <text>tRNA(Glu) + L-glutamate + ATP = L-glutamyl-tRNA(Glu) + AMP + diphosphate</text>
        <dbReference type="Rhea" id="RHEA:23540"/>
        <dbReference type="Rhea" id="RHEA-COMP:9663"/>
        <dbReference type="Rhea" id="RHEA-COMP:9680"/>
        <dbReference type="ChEBI" id="CHEBI:29985"/>
        <dbReference type="ChEBI" id="CHEBI:30616"/>
        <dbReference type="ChEBI" id="CHEBI:33019"/>
        <dbReference type="ChEBI" id="CHEBI:78442"/>
        <dbReference type="ChEBI" id="CHEBI:78520"/>
        <dbReference type="ChEBI" id="CHEBI:456215"/>
        <dbReference type="EC" id="6.1.1.17"/>
    </reaction>
</comment>
<comment type="subunit">
    <text evidence="1">Monomer.</text>
</comment>
<comment type="subcellular location">
    <subcellularLocation>
        <location evidence="1">Cytoplasm</location>
    </subcellularLocation>
</comment>
<comment type="similarity">
    <text evidence="1">Belongs to the class-I aminoacyl-tRNA synthetase family. Glutamate--tRNA ligase type 1 subfamily.</text>
</comment>
<proteinExistence type="inferred from homology"/>
<feature type="chain" id="PRO_0000119591" description="Glutamate--tRNA ligase">
    <location>
        <begin position="1"/>
        <end position="521"/>
    </location>
</feature>
<feature type="region of interest" description="Insert">
    <location>
        <begin position="320"/>
        <end position="347"/>
    </location>
</feature>
<feature type="short sequence motif" description="'HIGH' region" evidence="1">
    <location>
        <begin position="13"/>
        <end position="23"/>
    </location>
</feature>
<feature type="short sequence motif" description="'KMSKS' region" evidence="1">
    <location>
        <begin position="253"/>
        <end position="257"/>
    </location>
</feature>
<feature type="binding site" evidence="1">
    <location>
        <position position="256"/>
    </location>
    <ligand>
        <name>ATP</name>
        <dbReference type="ChEBI" id="CHEBI:30616"/>
    </ligand>
</feature>
<organism>
    <name type="scientific">Leptospira interrogans serogroup Icterohaemorrhagiae serovar Lai (strain 56601)</name>
    <dbReference type="NCBI Taxonomy" id="189518"/>
    <lineage>
        <taxon>Bacteria</taxon>
        <taxon>Pseudomonadati</taxon>
        <taxon>Spirochaetota</taxon>
        <taxon>Spirochaetia</taxon>
        <taxon>Leptospirales</taxon>
        <taxon>Leptospiraceae</taxon>
        <taxon>Leptospira</taxon>
    </lineage>
</organism>
<name>SYE_LEPIN</name>
<protein>
    <recommendedName>
        <fullName evidence="1">Glutamate--tRNA ligase</fullName>
        <ecNumber evidence="1">6.1.1.17</ecNumber>
    </recommendedName>
    <alternativeName>
        <fullName evidence="1">Glutamyl-tRNA synthetase</fullName>
        <shortName evidence="1">GluRS</shortName>
    </alternativeName>
</protein>
<gene>
    <name evidence="1" type="primary">gltX</name>
    <name type="ordered locus">LA_4190</name>
</gene>
<accession>Q8EYM3</accession>